<keyword id="KW-0963">Cytoplasm</keyword>
<keyword id="KW-0378">Hydrolase</keyword>
<keyword id="KW-0539">Nucleus</keyword>
<keyword id="KW-0645">Protease</keyword>
<keyword id="KW-0647">Proteasome</keyword>
<keyword id="KW-1185">Reference proteome</keyword>
<keyword id="KW-0888">Threonine protease</keyword>
<keyword id="KW-0865">Zymogen</keyword>
<comment type="function">
    <text>The proteasome is a multicatalytic proteinase complex which is characterized by its ability to cleave peptides with Arg, Phe, Tyr, Leu, and Glu adjacent to the leaving group at neutral or slightly basic pH. The proteasome has an ATP-dependent proteolytic activity.</text>
</comment>
<comment type="catalytic activity">
    <reaction>
        <text>Cleavage of peptide bonds with very broad specificity.</text>
        <dbReference type="EC" id="3.4.25.1"/>
    </reaction>
</comment>
<comment type="subunit">
    <text evidence="3 4">Component of the 20S core complex of the 26S proteasome. The 26S proteasome is composed of a core protease (CP), known as the 20S proteasome, capped at one or both ends by the 19S regulatory particle (RP/PA700). The 20S proteasome core is composed of 28 subunits that are arranged in four stacked rings, resulting in a barrel-shaped structure. The two end rings are each formed by seven alpha subunits, and the two central rings are each formed by seven beta subunits. The catalytic chamber with the active sites is on the inside of the barrel.</text>
</comment>
<comment type="subcellular location">
    <subcellularLocation>
        <location evidence="2">Cytoplasm</location>
    </subcellularLocation>
    <subcellularLocation>
        <location evidence="1">Nucleus</location>
    </subcellularLocation>
</comment>
<comment type="similarity">
    <text evidence="2">Belongs to the peptidase T1B family.</text>
</comment>
<sequence length="273" mass="29485">MKLDTSGLETTMPVIGFGSNSEMLDGFSSAPSFDLPRTTDFDGFQKKAVEMVKPAKGTTTLAFIFKEGVMVAADSRASMGGYISSQSVKKIIEINPYMLGTMAGGAADCQFWHRNLGIKCRLHELANKRRISVSGASKLLANMLYSYRGMGLSVGTMIAGWDETGPGLYYVDNEGGRLKGDRFSVGSGSPYAYGVLDSGYKFDMSVEEASELARRSIYHATFRDGASGGVASVYHVGPQGWTKLSGDDVGELHYHYYPVAPITAEHVMEEAAE</sequence>
<gene>
    <name type="primary">PBE2</name>
    <name type="ordered locus">At3g26340</name>
    <name type="ORF">F20C19.6</name>
</gene>
<dbReference type="EC" id="3.4.25.1"/>
<dbReference type="EMBL" id="AP001298">
    <property type="protein sequence ID" value="BAB02194.1"/>
    <property type="molecule type" value="Genomic_DNA"/>
</dbReference>
<dbReference type="EMBL" id="CP002686">
    <property type="protein sequence ID" value="AEE77147.1"/>
    <property type="molecule type" value="Genomic_DNA"/>
</dbReference>
<dbReference type="EMBL" id="AY125569">
    <property type="protein sequence ID" value="AAM78079.1"/>
    <property type="molecule type" value="mRNA"/>
</dbReference>
<dbReference type="EMBL" id="AF439846">
    <property type="protein sequence ID" value="AAL27514.1"/>
    <property type="molecule type" value="mRNA"/>
</dbReference>
<dbReference type="EMBL" id="AY085678">
    <property type="protein sequence ID" value="AAM62897.1"/>
    <property type="molecule type" value="mRNA"/>
</dbReference>
<dbReference type="RefSeq" id="NP_189265.1">
    <property type="nucleotide sequence ID" value="NM_113541.4"/>
</dbReference>
<dbReference type="SMR" id="Q9LIP2"/>
<dbReference type="BioGRID" id="7569">
    <property type="interactions" value="59"/>
</dbReference>
<dbReference type="FunCoup" id="Q9LIP2">
    <property type="interactions" value="2642"/>
</dbReference>
<dbReference type="IntAct" id="Q9LIP2">
    <property type="interactions" value="2"/>
</dbReference>
<dbReference type="STRING" id="3702.Q9LIP2"/>
<dbReference type="MEROPS" id="T01.A10"/>
<dbReference type="PaxDb" id="3702-AT3G26340.1"/>
<dbReference type="ProteomicsDB" id="226228"/>
<dbReference type="EnsemblPlants" id="AT3G26340.1">
    <property type="protein sequence ID" value="AT3G26340.1"/>
    <property type="gene ID" value="AT3G26340"/>
</dbReference>
<dbReference type="GeneID" id="822238"/>
<dbReference type="Gramene" id="AT3G26340.1">
    <property type="protein sequence ID" value="AT3G26340.1"/>
    <property type="gene ID" value="AT3G26340"/>
</dbReference>
<dbReference type="KEGG" id="ath:AT3G26340"/>
<dbReference type="Araport" id="AT3G26340"/>
<dbReference type="TAIR" id="AT3G26340"/>
<dbReference type="eggNOG" id="KOG0175">
    <property type="taxonomic scope" value="Eukaryota"/>
</dbReference>
<dbReference type="HOGENOM" id="CLU_035750_7_3_1"/>
<dbReference type="InParanoid" id="Q9LIP2"/>
<dbReference type="OMA" id="ICGWDKV"/>
<dbReference type="OrthoDB" id="1025694at2759"/>
<dbReference type="PhylomeDB" id="Q9LIP2"/>
<dbReference type="CD-CODE" id="4299E36E">
    <property type="entry name" value="Nucleolus"/>
</dbReference>
<dbReference type="PRO" id="PR:Q9LIP2"/>
<dbReference type="Proteomes" id="UP000006548">
    <property type="component" value="Chromosome 3"/>
</dbReference>
<dbReference type="ExpressionAtlas" id="Q9LIP2">
    <property type="expression patterns" value="baseline and differential"/>
</dbReference>
<dbReference type="GO" id="GO:0005829">
    <property type="term" value="C:cytosol"/>
    <property type="evidence" value="ECO:0007005"/>
    <property type="project" value="TAIR"/>
</dbReference>
<dbReference type="GO" id="GO:0005634">
    <property type="term" value="C:nucleus"/>
    <property type="evidence" value="ECO:0007669"/>
    <property type="project" value="UniProtKB-SubCell"/>
</dbReference>
<dbReference type="GO" id="GO:0000502">
    <property type="term" value="C:proteasome complex"/>
    <property type="evidence" value="ECO:0000314"/>
    <property type="project" value="TAIR"/>
</dbReference>
<dbReference type="GO" id="GO:0019774">
    <property type="term" value="C:proteasome core complex, beta-subunit complex"/>
    <property type="evidence" value="ECO:0000250"/>
    <property type="project" value="UniProtKB"/>
</dbReference>
<dbReference type="GO" id="GO:0004298">
    <property type="term" value="F:threonine-type endopeptidase activity"/>
    <property type="evidence" value="ECO:0007669"/>
    <property type="project" value="UniProtKB-KW"/>
</dbReference>
<dbReference type="GO" id="GO:0051603">
    <property type="term" value="P:proteolysis involved in protein catabolic process"/>
    <property type="evidence" value="ECO:0007669"/>
    <property type="project" value="InterPro"/>
</dbReference>
<dbReference type="CDD" id="cd03761">
    <property type="entry name" value="proteasome_beta_type_5"/>
    <property type="match status" value="1"/>
</dbReference>
<dbReference type="FunFam" id="3.60.20.10:FF:000034">
    <property type="entry name" value="Proteasome subunit beta"/>
    <property type="match status" value="1"/>
</dbReference>
<dbReference type="Gene3D" id="3.60.20.10">
    <property type="entry name" value="Glutamine Phosphoribosylpyrophosphate, subunit 1, domain 1"/>
    <property type="match status" value="1"/>
</dbReference>
<dbReference type="InterPro" id="IPR029055">
    <property type="entry name" value="Ntn_hydrolases_N"/>
</dbReference>
<dbReference type="InterPro" id="IPR000243">
    <property type="entry name" value="Pept_T1A_subB"/>
</dbReference>
<dbReference type="InterPro" id="IPR016050">
    <property type="entry name" value="Proteasome_bsu_CS"/>
</dbReference>
<dbReference type="InterPro" id="IPR001353">
    <property type="entry name" value="Proteasome_sua/b"/>
</dbReference>
<dbReference type="InterPro" id="IPR023333">
    <property type="entry name" value="Proteasome_suB-type"/>
</dbReference>
<dbReference type="PANTHER" id="PTHR32194">
    <property type="entry name" value="METALLOPROTEASE TLDD"/>
    <property type="match status" value="1"/>
</dbReference>
<dbReference type="PANTHER" id="PTHR32194:SF3">
    <property type="entry name" value="PROTEASOME SUBUNIT BETA"/>
    <property type="match status" value="1"/>
</dbReference>
<dbReference type="Pfam" id="PF00227">
    <property type="entry name" value="Proteasome"/>
    <property type="match status" value="1"/>
</dbReference>
<dbReference type="PRINTS" id="PR00141">
    <property type="entry name" value="PROTEASOME"/>
</dbReference>
<dbReference type="SUPFAM" id="SSF56235">
    <property type="entry name" value="N-terminal nucleophile aminohydrolases (Ntn hydrolases)"/>
    <property type="match status" value="1"/>
</dbReference>
<dbReference type="PROSITE" id="PS00854">
    <property type="entry name" value="PROTEASOME_BETA_1"/>
    <property type="match status" value="1"/>
</dbReference>
<dbReference type="PROSITE" id="PS51476">
    <property type="entry name" value="PROTEASOME_BETA_2"/>
    <property type="match status" value="1"/>
</dbReference>
<feature type="propeptide" id="PRO_0000042826" description="Removed in mature form" evidence="1">
    <location>
        <begin position="1"/>
        <end position="57"/>
    </location>
</feature>
<feature type="chain" id="PRO_0000042827" description="Proteasome subunit beta type-5-B">
    <location>
        <begin position="58"/>
        <end position="273"/>
    </location>
</feature>
<feature type="active site" description="Nucleophile" evidence="1">
    <location>
        <position position="58"/>
    </location>
</feature>
<reference key="1">
    <citation type="journal article" date="2000" name="DNA Res.">
        <title>Structural analysis of Arabidopsis thaliana chromosome 3. II. Sequence features of the 4,251,695 bp regions covered by 90 P1, TAC and BAC clones.</title>
        <authorList>
            <person name="Kaneko T."/>
            <person name="Katoh T."/>
            <person name="Sato S."/>
            <person name="Nakamura Y."/>
            <person name="Asamizu E."/>
            <person name="Tabata S."/>
        </authorList>
    </citation>
    <scope>NUCLEOTIDE SEQUENCE [LARGE SCALE GENOMIC DNA]</scope>
    <source>
        <strain>cv. Columbia</strain>
    </source>
</reference>
<reference key="2">
    <citation type="journal article" date="2017" name="Plant J.">
        <title>Araport11: a complete reannotation of the Arabidopsis thaliana reference genome.</title>
        <authorList>
            <person name="Cheng C.Y."/>
            <person name="Krishnakumar V."/>
            <person name="Chan A.P."/>
            <person name="Thibaud-Nissen F."/>
            <person name="Schobel S."/>
            <person name="Town C.D."/>
        </authorList>
    </citation>
    <scope>GENOME REANNOTATION</scope>
    <source>
        <strain>cv. Columbia</strain>
    </source>
</reference>
<reference key="3">
    <citation type="journal article" date="2003" name="Science">
        <title>Empirical analysis of transcriptional activity in the Arabidopsis genome.</title>
        <authorList>
            <person name="Yamada K."/>
            <person name="Lim J."/>
            <person name="Dale J.M."/>
            <person name="Chen H."/>
            <person name="Shinn P."/>
            <person name="Palm C.J."/>
            <person name="Southwick A.M."/>
            <person name="Wu H.C."/>
            <person name="Kim C.J."/>
            <person name="Nguyen M."/>
            <person name="Pham P.K."/>
            <person name="Cheuk R.F."/>
            <person name="Karlin-Newmann G."/>
            <person name="Liu S.X."/>
            <person name="Lam B."/>
            <person name="Sakano H."/>
            <person name="Wu T."/>
            <person name="Yu G."/>
            <person name="Miranda M."/>
            <person name="Quach H.L."/>
            <person name="Tripp M."/>
            <person name="Chang C.H."/>
            <person name="Lee J.M."/>
            <person name="Toriumi M.J."/>
            <person name="Chan M.M."/>
            <person name="Tang C.C."/>
            <person name="Onodera C.S."/>
            <person name="Deng J.M."/>
            <person name="Akiyama K."/>
            <person name="Ansari Y."/>
            <person name="Arakawa T."/>
            <person name="Banh J."/>
            <person name="Banno F."/>
            <person name="Bowser L."/>
            <person name="Brooks S.Y."/>
            <person name="Carninci P."/>
            <person name="Chao Q."/>
            <person name="Choy N."/>
            <person name="Enju A."/>
            <person name="Goldsmith A.D."/>
            <person name="Gurjal M."/>
            <person name="Hansen N.F."/>
            <person name="Hayashizaki Y."/>
            <person name="Johnson-Hopson C."/>
            <person name="Hsuan V.W."/>
            <person name="Iida K."/>
            <person name="Karnes M."/>
            <person name="Khan S."/>
            <person name="Koesema E."/>
            <person name="Ishida J."/>
            <person name="Jiang P.X."/>
            <person name="Jones T."/>
            <person name="Kawai J."/>
            <person name="Kamiya A."/>
            <person name="Meyers C."/>
            <person name="Nakajima M."/>
            <person name="Narusaka M."/>
            <person name="Seki M."/>
            <person name="Sakurai T."/>
            <person name="Satou M."/>
            <person name="Tamse R."/>
            <person name="Vaysberg M."/>
            <person name="Wallender E.K."/>
            <person name="Wong C."/>
            <person name="Yamamura Y."/>
            <person name="Yuan S."/>
            <person name="Shinozaki K."/>
            <person name="Davis R.W."/>
            <person name="Theologis A."/>
            <person name="Ecker J.R."/>
        </authorList>
    </citation>
    <scope>NUCLEOTIDE SEQUENCE [LARGE SCALE MRNA]</scope>
    <source>
        <strain>cv. Columbia</strain>
    </source>
</reference>
<reference key="4">
    <citation type="submission" date="2002-03" db="EMBL/GenBank/DDBJ databases">
        <title>Full-length cDNA from Arabidopsis thaliana.</title>
        <authorList>
            <person name="Brover V.V."/>
            <person name="Troukhan M.E."/>
            <person name="Alexandrov N.A."/>
            <person name="Lu Y.-P."/>
            <person name="Flavell R.B."/>
            <person name="Feldmann K.A."/>
        </authorList>
    </citation>
    <scope>NUCLEOTIDE SEQUENCE [LARGE SCALE MRNA]</scope>
</reference>
<reference key="5">
    <citation type="journal article" date="2004" name="J. Biol. Chem.">
        <title>Purification of the Arabidopsis 26 S proteasome: biochemical and molecular analyses revealed the presence of multiple isoforms.</title>
        <authorList>
            <person name="Yang P."/>
            <person name="Fu H."/>
            <person name="Walker J."/>
            <person name="Papa C.M."/>
            <person name="Smalle J."/>
            <person name="Ju Y.-M."/>
            <person name="Vierstra R.D."/>
        </authorList>
    </citation>
    <scope>SUBUNIT</scope>
    <scope>IDENTIFICATION BY MASS SPECTROMETRY</scope>
</reference>
<reference key="6">
    <citation type="journal article" date="2010" name="J. Biol. Chem.">
        <title>Affinity purification of the Arabidopsis 26 S proteasome reveals a diverse array of plant proteolytic complexes.</title>
        <authorList>
            <person name="Book A.J."/>
            <person name="Gladman N.P."/>
            <person name="Lee S.S."/>
            <person name="Scalf M."/>
            <person name="Smith L.M."/>
            <person name="Vierstra R.D."/>
        </authorList>
    </citation>
    <scope>IDENTIFICATION BY MASS SPECTROMETRY</scope>
    <scope>CHARACTERIZATION OF THE 26S PROTEASOME COMPLEX</scope>
    <scope>SUBUNIT</scope>
</reference>
<organism>
    <name type="scientific">Arabidopsis thaliana</name>
    <name type="common">Mouse-ear cress</name>
    <dbReference type="NCBI Taxonomy" id="3702"/>
    <lineage>
        <taxon>Eukaryota</taxon>
        <taxon>Viridiplantae</taxon>
        <taxon>Streptophyta</taxon>
        <taxon>Embryophyta</taxon>
        <taxon>Tracheophyta</taxon>
        <taxon>Spermatophyta</taxon>
        <taxon>Magnoliopsida</taxon>
        <taxon>eudicotyledons</taxon>
        <taxon>Gunneridae</taxon>
        <taxon>Pentapetalae</taxon>
        <taxon>rosids</taxon>
        <taxon>malvids</taxon>
        <taxon>Brassicales</taxon>
        <taxon>Brassicaceae</taxon>
        <taxon>Camelineae</taxon>
        <taxon>Arabidopsis</taxon>
    </lineage>
</organism>
<name>PSB5B_ARATH</name>
<evidence type="ECO:0000250" key="1"/>
<evidence type="ECO:0000255" key="2">
    <source>
        <dbReference type="PROSITE-ProRule" id="PRU00809"/>
    </source>
</evidence>
<evidence type="ECO:0000269" key="3">
    <source>
    </source>
</evidence>
<evidence type="ECO:0000269" key="4">
    <source>
    </source>
</evidence>
<accession>Q9LIP2</accession>
<proteinExistence type="evidence at protein level"/>
<protein>
    <recommendedName>
        <fullName>Proteasome subunit beta type-5-B</fullName>
        <ecNumber>3.4.25.1</ecNumber>
    </recommendedName>
    <alternativeName>
        <fullName>20S proteasome beta subunit E-2</fullName>
    </alternativeName>
    <alternativeName>
        <fullName>Proteasome epsilon-2 chain</fullName>
    </alternativeName>
</protein>